<accession>A9MR41</accession>
<reference key="1">
    <citation type="submission" date="2007-11" db="EMBL/GenBank/DDBJ databases">
        <authorList>
            <consortium name="The Salmonella enterica serovar Arizonae Genome Sequencing Project"/>
            <person name="McClelland M."/>
            <person name="Sanderson E.K."/>
            <person name="Porwollik S."/>
            <person name="Spieth J."/>
            <person name="Clifton W.S."/>
            <person name="Fulton R."/>
            <person name="Chunyan W."/>
            <person name="Wollam A."/>
            <person name="Shah N."/>
            <person name="Pepin K."/>
            <person name="Bhonagiri V."/>
            <person name="Nash W."/>
            <person name="Johnson M."/>
            <person name="Thiruvilangam P."/>
            <person name="Wilson R."/>
        </authorList>
    </citation>
    <scope>NUCLEOTIDE SEQUENCE [LARGE SCALE GENOMIC DNA]</scope>
    <source>
        <strain>ATCC BAA-731 / CDC346-86 / RSK2980</strain>
    </source>
</reference>
<feature type="chain" id="PRO_1000075685" description="4-hydroxy-tetrahydrodipicolinate reductase">
    <location>
        <begin position="1"/>
        <end position="273"/>
    </location>
</feature>
<feature type="active site" description="Proton donor/acceptor" evidence="1">
    <location>
        <position position="159"/>
    </location>
</feature>
<feature type="active site" description="Proton donor" evidence="1">
    <location>
        <position position="163"/>
    </location>
</feature>
<feature type="binding site" evidence="1">
    <location>
        <begin position="12"/>
        <end position="17"/>
    </location>
    <ligand>
        <name>NAD(+)</name>
        <dbReference type="ChEBI" id="CHEBI:57540"/>
    </ligand>
</feature>
<feature type="binding site" evidence="1">
    <location>
        <position position="38"/>
    </location>
    <ligand>
        <name>NAD(+)</name>
        <dbReference type="ChEBI" id="CHEBI:57540"/>
    </ligand>
</feature>
<feature type="binding site" evidence="1">
    <location>
        <position position="39"/>
    </location>
    <ligand>
        <name>NADP(+)</name>
        <dbReference type="ChEBI" id="CHEBI:58349"/>
    </ligand>
</feature>
<feature type="binding site" evidence="1">
    <location>
        <begin position="102"/>
        <end position="104"/>
    </location>
    <ligand>
        <name>NAD(+)</name>
        <dbReference type="ChEBI" id="CHEBI:57540"/>
    </ligand>
</feature>
<feature type="binding site" evidence="1">
    <location>
        <begin position="126"/>
        <end position="129"/>
    </location>
    <ligand>
        <name>NAD(+)</name>
        <dbReference type="ChEBI" id="CHEBI:57540"/>
    </ligand>
</feature>
<feature type="binding site" evidence="1">
    <location>
        <position position="160"/>
    </location>
    <ligand>
        <name>(S)-2,3,4,5-tetrahydrodipicolinate</name>
        <dbReference type="ChEBI" id="CHEBI:16845"/>
    </ligand>
</feature>
<feature type="binding site" evidence="1">
    <location>
        <begin position="169"/>
        <end position="170"/>
    </location>
    <ligand>
        <name>(S)-2,3,4,5-tetrahydrodipicolinate</name>
        <dbReference type="ChEBI" id="CHEBI:16845"/>
    </ligand>
</feature>
<keyword id="KW-0028">Amino-acid biosynthesis</keyword>
<keyword id="KW-0963">Cytoplasm</keyword>
<keyword id="KW-0220">Diaminopimelate biosynthesis</keyword>
<keyword id="KW-0457">Lysine biosynthesis</keyword>
<keyword id="KW-0520">NAD</keyword>
<keyword id="KW-0521">NADP</keyword>
<keyword id="KW-0560">Oxidoreductase</keyword>
<keyword id="KW-1185">Reference proteome</keyword>
<proteinExistence type="inferred from homology"/>
<dbReference type="EC" id="1.17.1.8" evidence="1"/>
<dbReference type="EMBL" id="CP000880">
    <property type="protein sequence ID" value="ABX22789.1"/>
    <property type="molecule type" value="Genomic_DNA"/>
</dbReference>
<dbReference type="SMR" id="A9MR41"/>
<dbReference type="STRING" id="41514.SARI_02943"/>
<dbReference type="KEGG" id="ses:SARI_02943"/>
<dbReference type="HOGENOM" id="CLU_047479_2_1_6"/>
<dbReference type="UniPathway" id="UPA00034">
    <property type="reaction ID" value="UER00018"/>
</dbReference>
<dbReference type="Proteomes" id="UP000002084">
    <property type="component" value="Chromosome"/>
</dbReference>
<dbReference type="GO" id="GO:0005829">
    <property type="term" value="C:cytosol"/>
    <property type="evidence" value="ECO:0007669"/>
    <property type="project" value="TreeGrafter"/>
</dbReference>
<dbReference type="GO" id="GO:0008839">
    <property type="term" value="F:4-hydroxy-tetrahydrodipicolinate reductase"/>
    <property type="evidence" value="ECO:0007669"/>
    <property type="project" value="UniProtKB-EC"/>
</dbReference>
<dbReference type="GO" id="GO:0051287">
    <property type="term" value="F:NAD binding"/>
    <property type="evidence" value="ECO:0007669"/>
    <property type="project" value="UniProtKB-UniRule"/>
</dbReference>
<dbReference type="GO" id="GO:0050661">
    <property type="term" value="F:NADP binding"/>
    <property type="evidence" value="ECO:0007669"/>
    <property type="project" value="UniProtKB-UniRule"/>
</dbReference>
<dbReference type="GO" id="GO:0016726">
    <property type="term" value="F:oxidoreductase activity, acting on CH or CH2 groups, NAD or NADP as acceptor"/>
    <property type="evidence" value="ECO:0007669"/>
    <property type="project" value="UniProtKB-UniRule"/>
</dbReference>
<dbReference type="GO" id="GO:0019877">
    <property type="term" value="P:diaminopimelate biosynthetic process"/>
    <property type="evidence" value="ECO:0007669"/>
    <property type="project" value="UniProtKB-UniRule"/>
</dbReference>
<dbReference type="GO" id="GO:0009089">
    <property type="term" value="P:lysine biosynthetic process via diaminopimelate"/>
    <property type="evidence" value="ECO:0007669"/>
    <property type="project" value="UniProtKB-UniRule"/>
</dbReference>
<dbReference type="CDD" id="cd02274">
    <property type="entry name" value="DHDPR_N"/>
    <property type="match status" value="1"/>
</dbReference>
<dbReference type="FunFam" id="3.30.360.10:FF:000004">
    <property type="entry name" value="4-hydroxy-tetrahydrodipicolinate reductase"/>
    <property type="match status" value="1"/>
</dbReference>
<dbReference type="FunFam" id="3.40.50.720:FF:000048">
    <property type="entry name" value="4-hydroxy-tetrahydrodipicolinate reductase"/>
    <property type="match status" value="1"/>
</dbReference>
<dbReference type="Gene3D" id="3.30.360.10">
    <property type="entry name" value="Dihydrodipicolinate Reductase, domain 2"/>
    <property type="match status" value="1"/>
</dbReference>
<dbReference type="Gene3D" id="3.40.50.720">
    <property type="entry name" value="NAD(P)-binding Rossmann-like Domain"/>
    <property type="match status" value="1"/>
</dbReference>
<dbReference type="HAMAP" id="MF_00102">
    <property type="entry name" value="DapB"/>
    <property type="match status" value="1"/>
</dbReference>
<dbReference type="InterPro" id="IPR022663">
    <property type="entry name" value="DapB_C"/>
</dbReference>
<dbReference type="InterPro" id="IPR000846">
    <property type="entry name" value="DapB_N"/>
</dbReference>
<dbReference type="InterPro" id="IPR022664">
    <property type="entry name" value="DapB_N_CS"/>
</dbReference>
<dbReference type="InterPro" id="IPR023940">
    <property type="entry name" value="DHDPR_bac"/>
</dbReference>
<dbReference type="InterPro" id="IPR036291">
    <property type="entry name" value="NAD(P)-bd_dom_sf"/>
</dbReference>
<dbReference type="NCBIfam" id="TIGR00036">
    <property type="entry name" value="dapB"/>
    <property type="match status" value="1"/>
</dbReference>
<dbReference type="PANTHER" id="PTHR20836:SF0">
    <property type="entry name" value="4-HYDROXY-TETRAHYDRODIPICOLINATE REDUCTASE 1, CHLOROPLASTIC-RELATED"/>
    <property type="match status" value="1"/>
</dbReference>
<dbReference type="PANTHER" id="PTHR20836">
    <property type="entry name" value="DIHYDRODIPICOLINATE REDUCTASE"/>
    <property type="match status" value="1"/>
</dbReference>
<dbReference type="Pfam" id="PF05173">
    <property type="entry name" value="DapB_C"/>
    <property type="match status" value="1"/>
</dbReference>
<dbReference type="Pfam" id="PF01113">
    <property type="entry name" value="DapB_N"/>
    <property type="match status" value="1"/>
</dbReference>
<dbReference type="PIRSF" id="PIRSF000161">
    <property type="entry name" value="DHPR"/>
    <property type="match status" value="1"/>
</dbReference>
<dbReference type="SUPFAM" id="SSF55347">
    <property type="entry name" value="Glyceraldehyde-3-phosphate dehydrogenase-like, C-terminal domain"/>
    <property type="match status" value="1"/>
</dbReference>
<dbReference type="SUPFAM" id="SSF51735">
    <property type="entry name" value="NAD(P)-binding Rossmann-fold domains"/>
    <property type="match status" value="1"/>
</dbReference>
<dbReference type="PROSITE" id="PS01298">
    <property type="entry name" value="DAPB"/>
    <property type="match status" value="1"/>
</dbReference>
<gene>
    <name evidence="1" type="primary">dapB</name>
    <name type="ordered locus">SARI_02943</name>
</gene>
<sequence length="273" mass="29099">MHEAQIRVAIVGAGGRMGRQLIQAALHMEGIQPGAALEREGSSLLGSDAGELAGVGKMGVIVQSDLALVKDDFDVLVDFTRPEGTLAHLAFCRKHGKSMVIGTTGFDEAGKQAIRDAAQEIAIVFAANFSVGVNVMLKLLEKTAKVMGDYSDIEIIEAHHRHKVDAPSGTALAMGETIAHALNKDLQDCAVYSREGHTGERVPGTIGFATVRAGDIIGEHTAMFADIGERVEITHKASSRMTFANGALRSALWLKTKKNGLFDMRDVLGLDVL</sequence>
<protein>
    <recommendedName>
        <fullName evidence="1">4-hydroxy-tetrahydrodipicolinate reductase</fullName>
        <shortName evidence="1">HTPA reductase</shortName>
        <ecNumber evidence="1">1.17.1.8</ecNumber>
    </recommendedName>
</protein>
<comment type="function">
    <text evidence="1">Catalyzes the conversion of 4-hydroxy-tetrahydrodipicolinate (HTPA) to tetrahydrodipicolinate.</text>
</comment>
<comment type="catalytic activity">
    <reaction evidence="1">
        <text>(S)-2,3,4,5-tetrahydrodipicolinate + NAD(+) + H2O = (2S,4S)-4-hydroxy-2,3,4,5-tetrahydrodipicolinate + NADH + H(+)</text>
        <dbReference type="Rhea" id="RHEA:35323"/>
        <dbReference type="ChEBI" id="CHEBI:15377"/>
        <dbReference type="ChEBI" id="CHEBI:15378"/>
        <dbReference type="ChEBI" id="CHEBI:16845"/>
        <dbReference type="ChEBI" id="CHEBI:57540"/>
        <dbReference type="ChEBI" id="CHEBI:57945"/>
        <dbReference type="ChEBI" id="CHEBI:67139"/>
        <dbReference type="EC" id="1.17.1.8"/>
    </reaction>
</comment>
<comment type="catalytic activity">
    <reaction evidence="1">
        <text>(S)-2,3,4,5-tetrahydrodipicolinate + NADP(+) + H2O = (2S,4S)-4-hydroxy-2,3,4,5-tetrahydrodipicolinate + NADPH + H(+)</text>
        <dbReference type="Rhea" id="RHEA:35331"/>
        <dbReference type="ChEBI" id="CHEBI:15377"/>
        <dbReference type="ChEBI" id="CHEBI:15378"/>
        <dbReference type="ChEBI" id="CHEBI:16845"/>
        <dbReference type="ChEBI" id="CHEBI:57783"/>
        <dbReference type="ChEBI" id="CHEBI:58349"/>
        <dbReference type="ChEBI" id="CHEBI:67139"/>
        <dbReference type="EC" id="1.17.1.8"/>
    </reaction>
</comment>
<comment type="pathway">
    <text evidence="1">Amino-acid biosynthesis; L-lysine biosynthesis via DAP pathway; (S)-tetrahydrodipicolinate from L-aspartate: step 4/4.</text>
</comment>
<comment type="subunit">
    <text evidence="1">Homotetramer.</text>
</comment>
<comment type="subcellular location">
    <subcellularLocation>
        <location evidence="1">Cytoplasm</location>
    </subcellularLocation>
</comment>
<comment type="similarity">
    <text evidence="1">Belongs to the DapB family.</text>
</comment>
<comment type="caution">
    <text evidence="2">Was originally thought to be a dihydrodipicolinate reductase (DHDPR), catalyzing the conversion of dihydrodipicolinate to tetrahydrodipicolinate. However, it was shown in E.coli that the substrate of the enzymatic reaction is not dihydrodipicolinate (DHDP) but in fact (2S,4S)-4-hydroxy-2,3,4,5-tetrahydrodipicolinic acid (HTPA), the product released by the DapA-catalyzed reaction.</text>
</comment>
<evidence type="ECO:0000255" key="1">
    <source>
        <dbReference type="HAMAP-Rule" id="MF_00102"/>
    </source>
</evidence>
<evidence type="ECO:0000305" key="2"/>
<name>DAPB_SALAR</name>
<organism>
    <name type="scientific">Salmonella arizonae (strain ATCC BAA-731 / CDC346-86 / RSK2980)</name>
    <dbReference type="NCBI Taxonomy" id="41514"/>
    <lineage>
        <taxon>Bacteria</taxon>
        <taxon>Pseudomonadati</taxon>
        <taxon>Pseudomonadota</taxon>
        <taxon>Gammaproteobacteria</taxon>
        <taxon>Enterobacterales</taxon>
        <taxon>Enterobacteriaceae</taxon>
        <taxon>Salmonella</taxon>
    </lineage>
</organism>